<accession>B9IZC4</accession>
<feature type="chain" id="PRO_1000147125" description="Ribosomal RNA small subunit methyltransferase A">
    <location>
        <begin position="1"/>
        <end position="292"/>
    </location>
</feature>
<feature type="binding site" evidence="1">
    <location>
        <position position="28"/>
    </location>
    <ligand>
        <name>S-adenosyl-L-methionine</name>
        <dbReference type="ChEBI" id="CHEBI:59789"/>
    </ligand>
</feature>
<feature type="binding site" evidence="1">
    <location>
        <position position="30"/>
    </location>
    <ligand>
        <name>S-adenosyl-L-methionine</name>
        <dbReference type="ChEBI" id="CHEBI:59789"/>
    </ligand>
</feature>
<feature type="binding site" evidence="1">
    <location>
        <position position="55"/>
    </location>
    <ligand>
        <name>S-adenosyl-L-methionine</name>
        <dbReference type="ChEBI" id="CHEBI:59789"/>
    </ligand>
</feature>
<feature type="binding site" evidence="1">
    <location>
        <position position="76"/>
    </location>
    <ligand>
        <name>S-adenosyl-L-methionine</name>
        <dbReference type="ChEBI" id="CHEBI:59789"/>
    </ligand>
</feature>
<feature type="binding site" evidence="1">
    <location>
        <position position="101"/>
    </location>
    <ligand>
        <name>S-adenosyl-L-methionine</name>
        <dbReference type="ChEBI" id="CHEBI:59789"/>
    </ligand>
</feature>
<feature type="binding site" evidence="1">
    <location>
        <position position="126"/>
    </location>
    <ligand>
        <name>S-adenosyl-L-methionine</name>
        <dbReference type="ChEBI" id="CHEBI:59789"/>
    </ligand>
</feature>
<name>RSMA_BACCQ</name>
<organism>
    <name type="scientific">Bacillus cereus (strain Q1)</name>
    <dbReference type="NCBI Taxonomy" id="361100"/>
    <lineage>
        <taxon>Bacteria</taxon>
        <taxon>Bacillati</taxon>
        <taxon>Bacillota</taxon>
        <taxon>Bacilli</taxon>
        <taxon>Bacillales</taxon>
        <taxon>Bacillaceae</taxon>
        <taxon>Bacillus</taxon>
        <taxon>Bacillus cereus group</taxon>
    </lineage>
</organism>
<keyword id="KW-0963">Cytoplasm</keyword>
<keyword id="KW-0489">Methyltransferase</keyword>
<keyword id="KW-0694">RNA-binding</keyword>
<keyword id="KW-0698">rRNA processing</keyword>
<keyword id="KW-0949">S-adenosyl-L-methionine</keyword>
<keyword id="KW-0808">Transferase</keyword>
<dbReference type="EC" id="2.1.1.182" evidence="1"/>
<dbReference type="EMBL" id="CP000227">
    <property type="protein sequence ID" value="ACM10568.1"/>
    <property type="molecule type" value="Genomic_DNA"/>
</dbReference>
<dbReference type="SMR" id="B9IZC4"/>
<dbReference type="KEGG" id="bcq:BCQ_0048"/>
<dbReference type="HOGENOM" id="CLU_041220_0_0_9"/>
<dbReference type="Proteomes" id="UP000000441">
    <property type="component" value="Chromosome"/>
</dbReference>
<dbReference type="GO" id="GO:0005829">
    <property type="term" value="C:cytosol"/>
    <property type="evidence" value="ECO:0007669"/>
    <property type="project" value="TreeGrafter"/>
</dbReference>
<dbReference type="GO" id="GO:0052908">
    <property type="term" value="F:16S rRNA (adenine(1518)-N(6)/adenine(1519)-N(6))-dimethyltransferase activity"/>
    <property type="evidence" value="ECO:0007669"/>
    <property type="project" value="UniProtKB-EC"/>
</dbReference>
<dbReference type="GO" id="GO:0003723">
    <property type="term" value="F:RNA binding"/>
    <property type="evidence" value="ECO:0007669"/>
    <property type="project" value="UniProtKB-KW"/>
</dbReference>
<dbReference type="CDD" id="cd02440">
    <property type="entry name" value="AdoMet_MTases"/>
    <property type="match status" value="1"/>
</dbReference>
<dbReference type="FunFam" id="1.10.8.100:FF:000002">
    <property type="entry name" value="Ribosomal RNA small subunit methyltransferase A"/>
    <property type="match status" value="1"/>
</dbReference>
<dbReference type="FunFam" id="3.40.50.150:FF:000023">
    <property type="entry name" value="Ribosomal RNA small subunit methyltransferase A"/>
    <property type="match status" value="1"/>
</dbReference>
<dbReference type="Gene3D" id="1.10.8.100">
    <property type="entry name" value="Ribosomal RNA adenine dimethylase-like, domain 2"/>
    <property type="match status" value="1"/>
</dbReference>
<dbReference type="Gene3D" id="3.40.50.150">
    <property type="entry name" value="Vaccinia Virus protein VP39"/>
    <property type="match status" value="1"/>
</dbReference>
<dbReference type="HAMAP" id="MF_00607">
    <property type="entry name" value="16SrRNA_methyltr_A"/>
    <property type="match status" value="1"/>
</dbReference>
<dbReference type="InterPro" id="IPR001737">
    <property type="entry name" value="KsgA/Erm"/>
</dbReference>
<dbReference type="InterPro" id="IPR023165">
    <property type="entry name" value="rRNA_Ade_diMease-like_C"/>
</dbReference>
<dbReference type="InterPro" id="IPR020596">
    <property type="entry name" value="rRNA_Ade_Mease_Trfase_CS"/>
</dbReference>
<dbReference type="InterPro" id="IPR020598">
    <property type="entry name" value="rRNA_Ade_methylase_Trfase_N"/>
</dbReference>
<dbReference type="InterPro" id="IPR011530">
    <property type="entry name" value="rRNA_adenine_dimethylase"/>
</dbReference>
<dbReference type="InterPro" id="IPR029063">
    <property type="entry name" value="SAM-dependent_MTases_sf"/>
</dbReference>
<dbReference type="NCBIfam" id="TIGR00755">
    <property type="entry name" value="ksgA"/>
    <property type="match status" value="1"/>
</dbReference>
<dbReference type="PANTHER" id="PTHR11727">
    <property type="entry name" value="DIMETHYLADENOSINE TRANSFERASE"/>
    <property type="match status" value="1"/>
</dbReference>
<dbReference type="PANTHER" id="PTHR11727:SF7">
    <property type="entry name" value="DIMETHYLADENOSINE TRANSFERASE-RELATED"/>
    <property type="match status" value="1"/>
</dbReference>
<dbReference type="Pfam" id="PF00398">
    <property type="entry name" value="RrnaAD"/>
    <property type="match status" value="1"/>
</dbReference>
<dbReference type="SMART" id="SM00650">
    <property type="entry name" value="rADc"/>
    <property type="match status" value="1"/>
</dbReference>
<dbReference type="SUPFAM" id="SSF53335">
    <property type="entry name" value="S-adenosyl-L-methionine-dependent methyltransferases"/>
    <property type="match status" value="1"/>
</dbReference>
<dbReference type="PROSITE" id="PS01131">
    <property type="entry name" value="RRNA_A_DIMETH"/>
    <property type="match status" value="1"/>
</dbReference>
<dbReference type="PROSITE" id="PS51689">
    <property type="entry name" value="SAM_RNA_A_N6_MT"/>
    <property type="match status" value="1"/>
</dbReference>
<gene>
    <name evidence="1" type="primary">rsmA</name>
    <name evidence="1" type="synonym">ksgA</name>
    <name type="ordered locus">BCQ_0048</name>
</gene>
<comment type="function">
    <text evidence="1">Specifically dimethylates two adjacent adenosines (A1518 and A1519) in the loop of a conserved hairpin near the 3'-end of 16S rRNA in the 30S particle. May play a critical role in biogenesis of 30S subunits.</text>
</comment>
<comment type="catalytic activity">
    <reaction evidence="1">
        <text>adenosine(1518)/adenosine(1519) in 16S rRNA + 4 S-adenosyl-L-methionine = N(6)-dimethyladenosine(1518)/N(6)-dimethyladenosine(1519) in 16S rRNA + 4 S-adenosyl-L-homocysteine + 4 H(+)</text>
        <dbReference type="Rhea" id="RHEA:19609"/>
        <dbReference type="Rhea" id="RHEA-COMP:10232"/>
        <dbReference type="Rhea" id="RHEA-COMP:10233"/>
        <dbReference type="ChEBI" id="CHEBI:15378"/>
        <dbReference type="ChEBI" id="CHEBI:57856"/>
        <dbReference type="ChEBI" id="CHEBI:59789"/>
        <dbReference type="ChEBI" id="CHEBI:74411"/>
        <dbReference type="ChEBI" id="CHEBI:74493"/>
        <dbReference type="EC" id="2.1.1.182"/>
    </reaction>
</comment>
<comment type="subcellular location">
    <subcellularLocation>
        <location evidence="1">Cytoplasm</location>
    </subcellularLocation>
</comment>
<comment type="similarity">
    <text evidence="1">Belongs to the class I-like SAM-binding methyltransferase superfamily. rRNA adenine N(6)-methyltransferase family. RsmA subfamily.</text>
</comment>
<proteinExistence type="inferred from homology"/>
<evidence type="ECO:0000255" key="1">
    <source>
        <dbReference type="HAMAP-Rule" id="MF_00607"/>
    </source>
</evidence>
<sequence length="292" mass="32768">MKDIATPNRTKDIVEKYGFSFKKSLGQNFLIDTNVLNRIVDHAEIGSESGAIEIGPGIGALTEQLAKRAKKVVAFEIDQRLLPILDETLAPYGNVTVINKDVLKADVHEVFSEQFEEGQDVMVVANLPYYITTPILFKLLEEKLPVRGFVVMMQKEVGDRLAAKPGTKEYGSLSIAIQYYTEVETVMTVPRTVFVPQPNVDSAIIRLLKRPKPVVEVTDETFFFEVVRASFAQRRKTLMNNLSNNLNGFPKDKELLDRILTEVGIDPKRRGETLSIEEFATLSNALVLHKLS</sequence>
<reference key="1">
    <citation type="journal article" date="2009" name="J. Bacteriol.">
        <title>Complete genome sequence of the extremophilic Bacillus cereus strain Q1 with industrial applications.</title>
        <authorList>
            <person name="Xiong Z."/>
            <person name="Jiang Y."/>
            <person name="Qi D."/>
            <person name="Lu H."/>
            <person name="Yang F."/>
            <person name="Yang J."/>
            <person name="Chen L."/>
            <person name="Sun L."/>
            <person name="Xu X."/>
            <person name="Xue Y."/>
            <person name="Zhu Y."/>
            <person name="Jin Q."/>
        </authorList>
    </citation>
    <scope>NUCLEOTIDE SEQUENCE [LARGE SCALE GENOMIC DNA]</scope>
    <source>
        <strain>Q1</strain>
    </source>
</reference>
<protein>
    <recommendedName>
        <fullName evidence="1">Ribosomal RNA small subunit methyltransferase A</fullName>
        <ecNumber evidence="1">2.1.1.182</ecNumber>
    </recommendedName>
    <alternativeName>
        <fullName evidence="1">16S rRNA (adenine(1518)-N(6)/adenine(1519)-N(6))-dimethyltransferase</fullName>
    </alternativeName>
    <alternativeName>
        <fullName evidence="1">16S rRNA dimethyladenosine transferase</fullName>
    </alternativeName>
    <alternativeName>
        <fullName evidence="1">16S rRNA dimethylase</fullName>
    </alternativeName>
    <alternativeName>
        <fullName evidence="1">S-adenosylmethionine-6-N', N'-adenosyl(rRNA) dimethyltransferase</fullName>
    </alternativeName>
</protein>